<proteinExistence type="inferred from homology"/>
<dbReference type="EMBL" id="CP000453">
    <property type="protein sequence ID" value="ABI55826.1"/>
    <property type="molecule type" value="Genomic_DNA"/>
</dbReference>
<dbReference type="RefSeq" id="WP_011628221.1">
    <property type="nucleotide sequence ID" value="NC_008340.1"/>
</dbReference>
<dbReference type="SMR" id="Q0ABG1"/>
<dbReference type="KEGG" id="aeh:Mlg_0472"/>
<dbReference type="eggNOG" id="COG0096">
    <property type="taxonomic scope" value="Bacteria"/>
</dbReference>
<dbReference type="HOGENOM" id="CLU_098428_0_0_6"/>
<dbReference type="OrthoDB" id="9802617at2"/>
<dbReference type="Proteomes" id="UP000001962">
    <property type="component" value="Chromosome"/>
</dbReference>
<dbReference type="GO" id="GO:1990904">
    <property type="term" value="C:ribonucleoprotein complex"/>
    <property type="evidence" value="ECO:0007669"/>
    <property type="project" value="UniProtKB-KW"/>
</dbReference>
<dbReference type="GO" id="GO:0005840">
    <property type="term" value="C:ribosome"/>
    <property type="evidence" value="ECO:0007669"/>
    <property type="project" value="UniProtKB-KW"/>
</dbReference>
<dbReference type="GO" id="GO:0019843">
    <property type="term" value="F:rRNA binding"/>
    <property type="evidence" value="ECO:0007669"/>
    <property type="project" value="UniProtKB-UniRule"/>
</dbReference>
<dbReference type="GO" id="GO:0003735">
    <property type="term" value="F:structural constituent of ribosome"/>
    <property type="evidence" value="ECO:0007669"/>
    <property type="project" value="InterPro"/>
</dbReference>
<dbReference type="GO" id="GO:0006412">
    <property type="term" value="P:translation"/>
    <property type="evidence" value="ECO:0007669"/>
    <property type="project" value="UniProtKB-UniRule"/>
</dbReference>
<dbReference type="FunFam" id="3.30.1370.30:FF:000002">
    <property type="entry name" value="30S ribosomal protein S8"/>
    <property type="match status" value="1"/>
</dbReference>
<dbReference type="FunFam" id="3.30.1490.10:FF:000001">
    <property type="entry name" value="30S ribosomal protein S8"/>
    <property type="match status" value="1"/>
</dbReference>
<dbReference type="Gene3D" id="3.30.1370.30">
    <property type="match status" value="1"/>
</dbReference>
<dbReference type="Gene3D" id="3.30.1490.10">
    <property type="match status" value="1"/>
</dbReference>
<dbReference type="HAMAP" id="MF_01302_B">
    <property type="entry name" value="Ribosomal_uS8_B"/>
    <property type="match status" value="1"/>
</dbReference>
<dbReference type="InterPro" id="IPR000630">
    <property type="entry name" value="Ribosomal_uS8"/>
</dbReference>
<dbReference type="InterPro" id="IPR047863">
    <property type="entry name" value="Ribosomal_uS8_CS"/>
</dbReference>
<dbReference type="InterPro" id="IPR035987">
    <property type="entry name" value="Ribosomal_uS8_sf"/>
</dbReference>
<dbReference type="NCBIfam" id="NF001109">
    <property type="entry name" value="PRK00136.1"/>
    <property type="match status" value="1"/>
</dbReference>
<dbReference type="PANTHER" id="PTHR11758">
    <property type="entry name" value="40S RIBOSOMAL PROTEIN S15A"/>
    <property type="match status" value="1"/>
</dbReference>
<dbReference type="Pfam" id="PF00410">
    <property type="entry name" value="Ribosomal_S8"/>
    <property type="match status" value="1"/>
</dbReference>
<dbReference type="SUPFAM" id="SSF56047">
    <property type="entry name" value="Ribosomal protein S8"/>
    <property type="match status" value="1"/>
</dbReference>
<dbReference type="PROSITE" id="PS00053">
    <property type="entry name" value="RIBOSOMAL_S8"/>
    <property type="match status" value="1"/>
</dbReference>
<name>RS8_ALKEH</name>
<protein>
    <recommendedName>
        <fullName evidence="1">Small ribosomal subunit protein uS8</fullName>
    </recommendedName>
    <alternativeName>
        <fullName evidence="2">30S ribosomal protein S8</fullName>
    </alternativeName>
</protein>
<reference key="1">
    <citation type="submission" date="2006-08" db="EMBL/GenBank/DDBJ databases">
        <title>Complete sequence of Alkalilimnicola ehrilichei MLHE-1.</title>
        <authorList>
            <person name="Copeland A."/>
            <person name="Lucas S."/>
            <person name="Lapidus A."/>
            <person name="Barry K."/>
            <person name="Detter J.C."/>
            <person name="Glavina del Rio T."/>
            <person name="Hammon N."/>
            <person name="Israni S."/>
            <person name="Dalin E."/>
            <person name="Tice H."/>
            <person name="Pitluck S."/>
            <person name="Sims D."/>
            <person name="Brettin T."/>
            <person name="Bruce D."/>
            <person name="Han C."/>
            <person name="Tapia R."/>
            <person name="Gilna P."/>
            <person name="Schmutz J."/>
            <person name="Larimer F."/>
            <person name="Land M."/>
            <person name="Hauser L."/>
            <person name="Kyrpides N."/>
            <person name="Mikhailova N."/>
            <person name="Oremland R.S."/>
            <person name="Hoeft S.E."/>
            <person name="Switzer-Blum J."/>
            <person name="Kulp T."/>
            <person name="King G."/>
            <person name="Tabita R."/>
            <person name="Witte B."/>
            <person name="Santini J.M."/>
            <person name="Basu P."/>
            <person name="Hollibaugh J.T."/>
            <person name="Xie G."/>
            <person name="Stolz J.F."/>
            <person name="Richardson P."/>
        </authorList>
    </citation>
    <scope>NUCLEOTIDE SEQUENCE [LARGE SCALE GENOMIC DNA]</scope>
    <source>
        <strain>ATCC BAA-1101 / DSM 17681 / MLHE-1</strain>
    </source>
</reference>
<sequence>MSMTDPIADMLTRVRNAQRAEKAEVSMPSSKIKQAIANVLKEEGYIESFEVGGDEKKPELKISLRYYQGEPVIRELERASSPGLRLFKDKGSLPRVRNGLGVAIVSTSKGVMTDRAAREAGHGGEVLCYVF</sequence>
<keyword id="KW-1185">Reference proteome</keyword>
<keyword id="KW-0687">Ribonucleoprotein</keyword>
<keyword id="KW-0689">Ribosomal protein</keyword>
<keyword id="KW-0694">RNA-binding</keyword>
<keyword id="KW-0699">rRNA-binding</keyword>
<accession>Q0ABG1</accession>
<gene>
    <name evidence="1" type="primary">rpsH</name>
    <name type="ordered locus">Mlg_0472</name>
</gene>
<organism>
    <name type="scientific">Alkalilimnicola ehrlichii (strain ATCC BAA-1101 / DSM 17681 / MLHE-1)</name>
    <dbReference type="NCBI Taxonomy" id="187272"/>
    <lineage>
        <taxon>Bacteria</taxon>
        <taxon>Pseudomonadati</taxon>
        <taxon>Pseudomonadota</taxon>
        <taxon>Gammaproteobacteria</taxon>
        <taxon>Chromatiales</taxon>
        <taxon>Ectothiorhodospiraceae</taxon>
        <taxon>Alkalilimnicola</taxon>
    </lineage>
</organism>
<evidence type="ECO:0000255" key="1">
    <source>
        <dbReference type="HAMAP-Rule" id="MF_01302"/>
    </source>
</evidence>
<evidence type="ECO:0000305" key="2"/>
<feature type="chain" id="PRO_0000290796" description="Small ribosomal subunit protein uS8">
    <location>
        <begin position="1"/>
        <end position="131"/>
    </location>
</feature>
<comment type="function">
    <text evidence="1">One of the primary rRNA binding proteins, it binds directly to 16S rRNA central domain where it helps coordinate assembly of the platform of the 30S subunit.</text>
</comment>
<comment type="subunit">
    <text evidence="1">Part of the 30S ribosomal subunit. Contacts proteins S5 and S12.</text>
</comment>
<comment type="similarity">
    <text evidence="1">Belongs to the universal ribosomal protein uS8 family.</text>
</comment>